<protein>
    <recommendedName>
        <fullName evidence="1">Cysteine--tRNA ligase</fullName>
        <ecNumber evidence="1">6.1.1.16</ecNumber>
    </recommendedName>
    <alternativeName>
        <fullName evidence="1">Cysteinyl-tRNA synthetase</fullName>
        <shortName evidence="1">CysRS</shortName>
    </alternativeName>
</protein>
<keyword id="KW-0030">Aminoacyl-tRNA synthetase</keyword>
<keyword id="KW-0067">ATP-binding</keyword>
<keyword id="KW-0963">Cytoplasm</keyword>
<keyword id="KW-0436">Ligase</keyword>
<keyword id="KW-0479">Metal-binding</keyword>
<keyword id="KW-0547">Nucleotide-binding</keyword>
<keyword id="KW-0648">Protein biosynthesis</keyword>
<keyword id="KW-0862">Zinc</keyword>
<gene>
    <name evidence="1" type="primary">cysS</name>
    <name type="ordered locus">Shewmr4_2498</name>
</gene>
<evidence type="ECO:0000255" key="1">
    <source>
        <dbReference type="HAMAP-Rule" id="MF_00041"/>
    </source>
</evidence>
<reference key="1">
    <citation type="submission" date="2006-08" db="EMBL/GenBank/DDBJ databases">
        <title>Complete sequence of Shewanella sp. MR-4.</title>
        <authorList>
            <consortium name="US DOE Joint Genome Institute"/>
            <person name="Copeland A."/>
            <person name="Lucas S."/>
            <person name="Lapidus A."/>
            <person name="Barry K."/>
            <person name="Detter J.C."/>
            <person name="Glavina del Rio T."/>
            <person name="Hammon N."/>
            <person name="Israni S."/>
            <person name="Dalin E."/>
            <person name="Tice H."/>
            <person name="Pitluck S."/>
            <person name="Kiss H."/>
            <person name="Brettin T."/>
            <person name="Bruce D."/>
            <person name="Han C."/>
            <person name="Tapia R."/>
            <person name="Gilna P."/>
            <person name="Schmutz J."/>
            <person name="Larimer F."/>
            <person name="Land M."/>
            <person name="Hauser L."/>
            <person name="Kyrpides N."/>
            <person name="Mikhailova N."/>
            <person name="Nealson K."/>
            <person name="Konstantinidis K."/>
            <person name="Klappenbach J."/>
            <person name="Tiedje J."/>
            <person name="Richardson P."/>
        </authorList>
    </citation>
    <scope>NUCLEOTIDE SEQUENCE [LARGE SCALE GENOMIC DNA]</scope>
    <source>
        <strain>MR-4</strain>
    </source>
</reference>
<comment type="catalytic activity">
    <reaction evidence="1">
        <text>tRNA(Cys) + L-cysteine + ATP = L-cysteinyl-tRNA(Cys) + AMP + diphosphate</text>
        <dbReference type="Rhea" id="RHEA:17773"/>
        <dbReference type="Rhea" id="RHEA-COMP:9661"/>
        <dbReference type="Rhea" id="RHEA-COMP:9679"/>
        <dbReference type="ChEBI" id="CHEBI:30616"/>
        <dbReference type="ChEBI" id="CHEBI:33019"/>
        <dbReference type="ChEBI" id="CHEBI:35235"/>
        <dbReference type="ChEBI" id="CHEBI:78442"/>
        <dbReference type="ChEBI" id="CHEBI:78517"/>
        <dbReference type="ChEBI" id="CHEBI:456215"/>
        <dbReference type="EC" id="6.1.1.16"/>
    </reaction>
</comment>
<comment type="cofactor">
    <cofactor evidence="1">
        <name>Zn(2+)</name>
        <dbReference type="ChEBI" id="CHEBI:29105"/>
    </cofactor>
    <text evidence="1">Binds 1 zinc ion per subunit.</text>
</comment>
<comment type="subunit">
    <text evidence="1">Monomer.</text>
</comment>
<comment type="subcellular location">
    <subcellularLocation>
        <location evidence="1">Cytoplasm</location>
    </subcellularLocation>
</comment>
<comment type="similarity">
    <text evidence="1">Belongs to the class-I aminoacyl-tRNA synthetase family.</text>
</comment>
<proteinExistence type="inferred from homology"/>
<name>SYC_SHESM</name>
<accession>Q0HH98</accession>
<organism>
    <name type="scientific">Shewanella sp. (strain MR-4)</name>
    <dbReference type="NCBI Taxonomy" id="60480"/>
    <lineage>
        <taxon>Bacteria</taxon>
        <taxon>Pseudomonadati</taxon>
        <taxon>Pseudomonadota</taxon>
        <taxon>Gammaproteobacteria</taxon>
        <taxon>Alteromonadales</taxon>
        <taxon>Shewanellaceae</taxon>
        <taxon>Shewanella</taxon>
    </lineage>
</organism>
<feature type="chain" id="PRO_1000006610" description="Cysteine--tRNA ligase">
    <location>
        <begin position="1"/>
        <end position="461"/>
    </location>
</feature>
<feature type="short sequence motif" description="'HIGH' region">
    <location>
        <begin position="32"/>
        <end position="42"/>
    </location>
</feature>
<feature type="short sequence motif" description="'KMSKS' region">
    <location>
        <begin position="268"/>
        <end position="272"/>
    </location>
</feature>
<feature type="binding site" evidence="1">
    <location>
        <position position="30"/>
    </location>
    <ligand>
        <name>Zn(2+)</name>
        <dbReference type="ChEBI" id="CHEBI:29105"/>
    </ligand>
</feature>
<feature type="binding site" evidence="1">
    <location>
        <position position="211"/>
    </location>
    <ligand>
        <name>Zn(2+)</name>
        <dbReference type="ChEBI" id="CHEBI:29105"/>
    </ligand>
</feature>
<feature type="binding site" evidence="1">
    <location>
        <position position="236"/>
    </location>
    <ligand>
        <name>Zn(2+)</name>
        <dbReference type="ChEBI" id="CHEBI:29105"/>
    </ligand>
</feature>
<feature type="binding site" evidence="1">
    <location>
        <position position="240"/>
    </location>
    <ligand>
        <name>Zn(2+)</name>
        <dbReference type="ChEBI" id="CHEBI:29105"/>
    </ligand>
</feature>
<feature type="binding site" evidence="1">
    <location>
        <position position="271"/>
    </location>
    <ligand>
        <name>ATP</name>
        <dbReference type="ChEBI" id="CHEBI:30616"/>
    </ligand>
</feature>
<sequence>MPMLKIYNSITRQKQEFKPITPGKVGMYVCGVTVYDLCHIGHGRTFVSFDMIVRYLRYAGYEVNFQRNITDIDDKIIKRANENQEDCNTLTDRLIGEMHKDFDALNMIRPDFEPRATLHITEIIDMVERLLARGHAYVAADGDVLFSVASFPEYGRLSGQNLEQLQAGARVEVDDNKQNPMDFVLWKMSKPGEPTWESPWGPGRPGWHIECSAMNSKHLGLHFDIHGGGSDLQFPHHENEIAQSCCAHDTPYVNYWMHTGMVMVDREKMSKSLGNFFTIRDVLGHYDPETVRYFLLSGHYRSQINYSEENLKQARAALERLYTAIKDVDLTVAPAPAEEFVAKFKAAMDDDFNTPEAYSVLFDMVREINRLKTTDMAQASAMAVAMKQLADVLGLLHQAPDAFFKGEGSDDEVAEIEALIVERNRARVEKDWPAADVARNRLNELGVVLEDGPSGTTWRKK</sequence>
<dbReference type="EC" id="6.1.1.16" evidence="1"/>
<dbReference type="EMBL" id="CP000446">
    <property type="protein sequence ID" value="ABI39569.1"/>
    <property type="molecule type" value="Genomic_DNA"/>
</dbReference>
<dbReference type="SMR" id="Q0HH98"/>
<dbReference type="KEGG" id="she:Shewmr4_2498"/>
<dbReference type="HOGENOM" id="CLU_013528_0_1_6"/>
<dbReference type="GO" id="GO:0005829">
    <property type="term" value="C:cytosol"/>
    <property type="evidence" value="ECO:0007669"/>
    <property type="project" value="TreeGrafter"/>
</dbReference>
<dbReference type="GO" id="GO:0005524">
    <property type="term" value="F:ATP binding"/>
    <property type="evidence" value="ECO:0007669"/>
    <property type="project" value="UniProtKB-UniRule"/>
</dbReference>
<dbReference type="GO" id="GO:0004817">
    <property type="term" value="F:cysteine-tRNA ligase activity"/>
    <property type="evidence" value="ECO:0007669"/>
    <property type="project" value="UniProtKB-UniRule"/>
</dbReference>
<dbReference type="GO" id="GO:0008270">
    <property type="term" value="F:zinc ion binding"/>
    <property type="evidence" value="ECO:0007669"/>
    <property type="project" value="UniProtKB-UniRule"/>
</dbReference>
<dbReference type="GO" id="GO:0006423">
    <property type="term" value="P:cysteinyl-tRNA aminoacylation"/>
    <property type="evidence" value="ECO:0007669"/>
    <property type="project" value="UniProtKB-UniRule"/>
</dbReference>
<dbReference type="CDD" id="cd07963">
    <property type="entry name" value="Anticodon_Ia_Cys"/>
    <property type="match status" value="1"/>
</dbReference>
<dbReference type="CDD" id="cd00672">
    <property type="entry name" value="CysRS_core"/>
    <property type="match status" value="1"/>
</dbReference>
<dbReference type="FunFam" id="1.20.120.1910:FF:000001">
    <property type="entry name" value="Cysteine--tRNA ligase"/>
    <property type="match status" value="1"/>
</dbReference>
<dbReference type="FunFam" id="3.40.50.620:FF:000009">
    <property type="entry name" value="Cysteine--tRNA ligase"/>
    <property type="match status" value="1"/>
</dbReference>
<dbReference type="Gene3D" id="1.20.120.1910">
    <property type="entry name" value="Cysteine-tRNA ligase, C-terminal anti-codon recognition domain"/>
    <property type="match status" value="1"/>
</dbReference>
<dbReference type="Gene3D" id="3.40.50.620">
    <property type="entry name" value="HUPs"/>
    <property type="match status" value="1"/>
</dbReference>
<dbReference type="HAMAP" id="MF_00041">
    <property type="entry name" value="Cys_tRNA_synth"/>
    <property type="match status" value="1"/>
</dbReference>
<dbReference type="InterPro" id="IPR015803">
    <property type="entry name" value="Cys-tRNA-ligase"/>
</dbReference>
<dbReference type="InterPro" id="IPR015273">
    <property type="entry name" value="Cys-tRNA-synt_Ia_DALR"/>
</dbReference>
<dbReference type="InterPro" id="IPR024909">
    <property type="entry name" value="Cys-tRNA/MSH_ligase"/>
</dbReference>
<dbReference type="InterPro" id="IPR056411">
    <property type="entry name" value="CysS_C"/>
</dbReference>
<dbReference type="InterPro" id="IPR014729">
    <property type="entry name" value="Rossmann-like_a/b/a_fold"/>
</dbReference>
<dbReference type="InterPro" id="IPR032678">
    <property type="entry name" value="tRNA-synt_1_cat_dom"/>
</dbReference>
<dbReference type="InterPro" id="IPR009080">
    <property type="entry name" value="tRNAsynth_Ia_anticodon-bd"/>
</dbReference>
<dbReference type="NCBIfam" id="TIGR00435">
    <property type="entry name" value="cysS"/>
    <property type="match status" value="1"/>
</dbReference>
<dbReference type="PANTHER" id="PTHR10890:SF3">
    <property type="entry name" value="CYSTEINE--TRNA LIGASE, CYTOPLASMIC"/>
    <property type="match status" value="1"/>
</dbReference>
<dbReference type="PANTHER" id="PTHR10890">
    <property type="entry name" value="CYSTEINYL-TRNA SYNTHETASE"/>
    <property type="match status" value="1"/>
</dbReference>
<dbReference type="Pfam" id="PF23493">
    <property type="entry name" value="CysS_C"/>
    <property type="match status" value="1"/>
</dbReference>
<dbReference type="Pfam" id="PF09190">
    <property type="entry name" value="DALR_2"/>
    <property type="match status" value="1"/>
</dbReference>
<dbReference type="Pfam" id="PF01406">
    <property type="entry name" value="tRNA-synt_1e"/>
    <property type="match status" value="1"/>
</dbReference>
<dbReference type="PRINTS" id="PR00983">
    <property type="entry name" value="TRNASYNTHCYS"/>
</dbReference>
<dbReference type="SMART" id="SM00840">
    <property type="entry name" value="DALR_2"/>
    <property type="match status" value="1"/>
</dbReference>
<dbReference type="SUPFAM" id="SSF47323">
    <property type="entry name" value="Anticodon-binding domain of a subclass of class I aminoacyl-tRNA synthetases"/>
    <property type="match status" value="1"/>
</dbReference>
<dbReference type="SUPFAM" id="SSF52374">
    <property type="entry name" value="Nucleotidylyl transferase"/>
    <property type="match status" value="1"/>
</dbReference>